<comment type="catalytic activity">
    <reaction>
        <text>L-seryl-[protein] + ATP = O-phospho-L-seryl-[protein] + ADP + H(+)</text>
        <dbReference type="Rhea" id="RHEA:17989"/>
        <dbReference type="Rhea" id="RHEA-COMP:9863"/>
        <dbReference type="Rhea" id="RHEA-COMP:11604"/>
        <dbReference type="ChEBI" id="CHEBI:15378"/>
        <dbReference type="ChEBI" id="CHEBI:29999"/>
        <dbReference type="ChEBI" id="CHEBI:30616"/>
        <dbReference type="ChEBI" id="CHEBI:83421"/>
        <dbReference type="ChEBI" id="CHEBI:456216"/>
        <dbReference type="EC" id="2.7.11.1"/>
    </reaction>
</comment>
<comment type="catalytic activity">
    <reaction>
        <text>L-threonyl-[protein] + ATP = O-phospho-L-threonyl-[protein] + ADP + H(+)</text>
        <dbReference type="Rhea" id="RHEA:46608"/>
        <dbReference type="Rhea" id="RHEA-COMP:11060"/>
        <dbReference type="Rhea" id="RHEA-COMP:11605"/>
        <dbReference type="ChEBI" id="CHEBI:15378"/>
        <dbReference type="ChEBI" id="CHEBI:30013"/>
        <dbReference type="ChEBI" id="CHEBI:30616"/>
        <dbReference type="ChEBI" id="CHEBI:61977"/>
        <dbReference type="ChEBI" id="CHEBI:456216"/>
        <dbReference type="EC" id="2.7.11.1"/>
    </reaction>
</comment>
<comment type="cofactor">
    <cofactor evidence="1">
        <name>Mg(2+)</name>
        <dbReference type="ChEBI" id="CHEBI:18420"/>
    </cofactor>
</comment>
<comment type="similarity">
    <text evidence="3">Belongs to the protein kinase superfamily. Ser/Thr protein kinase family. CDC7 subfamily.</text>
</comment>
<proteinExistence type="inferred from homology"/>
<dbReference type="EC" id="2.7.11.1"/>
<dbReference type="EMBL" id="AAFI02000187">
    <property type="protein sequence ID" value="EAL61432.1"/>
    <property type="molecule type" value="Genomic_DNA"/>
</dbReference>
<dbReference type="RefSeq" id="XP_629869.1">
    <property type="nucleotide sequence ID" value="XM_629867.1"/>
</dbReference>
<dbReference type="SMR" id="Q54DK3"/>
<dbReference type="FunCoup" id="Q54DK3">
    <property type="interactions" value="110"/>
</dbReference>
<dbReference type="STRING" id="44689.Q54DK3"/>
<dbReference type="GlyGen" id="Q54DK3">
    <property type="glycosylation" value="2 sites"/>
</dbReference>
<dbReference type="PaxDb" id="44689-DDB0231210"/>
<dbReference type="EnsemblProtists" id="EAL61432">
    <property type="protein sequence ID" value="EAL61432"/>
    <property type="gene ID" value="DDB_G0292152"/>
</dbReference>
<dbReference type="GeneID" id="8628551"/>
<dbReference type="KEGG" id="ddi:DDB_G0292152"/>
<dbReference type="dictyBase" id="DDB_G0292152">
    <property type="gene designation" value="cdc7"/>
</dbReference>
<dbReference type="VEuPathDB" id="AmoebaDB:DDB_G0292152"/>
<dbReference type="eggNOG" id="KOG1167">
    <property type="taxonomic scope" value="Eukaryota"/>
</dbReference>
<dbReference type="HOGENOM" id="CLU_289259_0_0_1"/>
<dbReference type="InParanoid" id="Q54DK3"/>
<dbReference type="OMA" id="IHFNDPP"/>
<dbReference type="Reactome" id="R-DDI-168638">
    <property type="pathway name" value="NOD1/2 Signaling Pathway"/>
</dbReference>
<dbReference type="Reactome" id="R-DDI-193648">
    <property type="pathway name" value="NRAGE signals death through JNK"/>
</dbReference>
<dbReference type="Reactome" id="R-DDI-198753">
    <property type="pathway name" value="ERK/MAPK targets"/>
</dbReference>
<dbReference type="Reactome" id="R-DDI-2559580">
    <property type="pathway name" value="Oxidative Stress Induced Senescence"/>
</dbReference>
<dbReference type="Reactome" id="R-DDI-2871796">
    <property type="pathway name" value="FCERI mediated MAPK activation"/>
</dbReference>
<dbReference type="Reactome" id="R-DDI-418592">
    <property type="pathway name" value="ADP signalling through P2Y purinoceptor 1"/>
</dbReference>
<dbReference type="Reactome" id="R-DDI-450321">
    <property type="pathway name" value="JNK (c-Jun kinases) phosphorylation and activation mediated by activated human TAK1"/>
</dbReference>
<dbReference type="Reactome" id="R-DDI-525793">
    <property type="pathway name" value="Myogenesis"/>
</dbReference>
<dbReference type="Reactome" id="R-DDI-6798695">
    <property type="pathway name" value="Neutrophil degranulation"/>
</dbReference>
<dbReference type="Reactome" id="R-DDI-9007892">
    <property type="pathway name" value="Interleukin-38 signaling"/>
</dbReference>
<dbReference type="PRO" id="PR:Q54DK3"/>
<dbReference type="Proteomes" id="UP000002195">
    <property type="component" value="Chromosome 6"/>
</dbReference>
<dbReference type="GO" id="GO:0005737">
    <property type="term" value="C:cytoplasm"/>
    <property type="evidence" value="ECO:0000318"/>
    <property type="project" value="GO_Central"/>
</dbReference>
<dbReference type="GO" id="GO:0005634">
    <property type="term" value="C:nucleus"/>
    <property type="evidence" value="ECO:0000318"/>
    <property type="project" value="GO_Central"/>
</dbReference>
<dbReference type="GO" id="GO:0005524">
    <property type="term" value="F:ATP binding"/>
    <property type="evidence" value="ECO:0007669"/>
    <property type="project" value="UniProtKB-KW"/>
</dbReference>
<dbReference type="GO" id="GO:0046872">
    <property type="term" value="F:metal ion binding"/>
    <property type="evidence" value="ECO:0007669"/>
    <property type="project" value="UniProtKB-KW"/>
</dbReference>
<dbReference type="GO" id="GO:0106310">
    <property type="term" value="F:protein serine kinase activity"/>
    <property type="evidence" value="ECO:0007669"/>
    <property type="project" value="RHEA"/>
</dbReference>
<dbReference type="GO" id="GO:0004674">
    <property type="term" value="F:protein serine/threonine kinase activity"/>
    <property type="evidence" value="ECO:0000318"/>
    <property type="project" value="GO_Central"/>
</dbReference>
<dbReference type="GO" id="GO:0035556">
    <property type="term" value="P:intracellular signal transduction"/>
    <property type="evidence" value="ECO:0000318"/>
    <property type="project" value="GO_Central"/>
</dbReference>
<dbReference type="CDD" id="cd14019">
    <property type="entry name" value="STKc_Cdc7"/>
    <property type="match status" value="1"/>
</dbReference>
<dbReference type="FunFam" id="3.30.200.20:FF:001137">
    <property type="entry name" value="CMGC family protein kinase"/>
    <property type="match status" value="1"/>
</dbReference>
<dbReference type="FunFam" id="1.10.510.10:FF:002086">
    <property type="entry name" value="Probable serine/threonine-protein kinase cdc7"/>
    <property type="match status" value="1"/>
</dbReference>
<dbReference type="Gene3D" id="3.30.200.20">
    <property type="entry name" value="Phosphorylase Kinase, domain 1"/>
    <property type="match status" value="1"/>
</dbReference>
<dbReference type="Gene3D" id="1.10.510.10">
    <property type="entry name" value="Transferase(Phosphotransferase) domain 1"/>
    <property type="match status" value="2"/>
</dbReference>
<dbReference type="InterPro" id="IPR011009">
    <property type="entry name" value="Kinase-like_dom_sf"/>
</dbReference>
<dbReference type="InterPro" id="IPR000719">
    <property type="entry name" value="Prot_kinase_dom"/>
</dbReference>
<dbReference type="InterPro" id="IPR017441">
    <property type="entry name" value="Protein_kinase_ATP_BS"/>
</dbReference>
<dbReference type="InterPro" id="IPR008271">
    <property type="entry name" value="Ser/Thr_kinase_AS"/>
</dbReference>
<dbReference type="PANTHER" id="PTHR44167:SF23">
    <property type="entry name" value="CDC7 KINASE, ISOFORM A-RELATED"/>
    <property type="match status" value="1"/>
</dbReference>
<dbReference type="PANTHER" id="PTHR44167">
    <property type="entry name" value="OVARIAN-SPECIFIC SERINE/THREONINE-PROTEIN KINASE LOK-RELATED"/>
    <property type="match status" value="1"/>
</dbReference>
<dbReference type="Pfam" id="PF00069">
    <property type="entry name" value="Pkinase"/>
    <property type="match status" value="2"/>
</dbReference>
<dbReference type="SMART" id="SM00220">
    <property type="entry name" value="S_TKc"/>
    <property type="match status" value="1"/>
</dbReference>
<dbReference type="SUPFAM" id="SSF56112">
    <property type="entry name" value="Protein kinase-like (PK-like)"/>
    <property type="match status" value="1"/>
</dbReference>
<dbReference type="PROSITE" id="PS00107">
    <property type="entry name" value="PROTEIN_KINASE_ATP"/>
    <property type="match status" value="1"/>
</dbReference>
<dbReference type="PROSITE" id="PS50011">
    <property type="entry name" value="PROTEIN_KINASE_DOM"/>
    <property type="match status" value="1"/>
</dbReference>
<dbReference type="PROSITE" id="PS00108">
    <property type="entry name" value="PROTEIN_KINASE_ST"/>
    <property type="match status" value="1"/>
</dbReference>
<organism>
    <name type="scientific">Dictyostelium discoideum</name>
    <name type="common">Social amoeba</name>
    <dbReference type="NCBI Taxonomy" id="44689"/>
    <lineage>
        <taxon>Eukaryota</taxon>
        <taxon>Amoebozoa</taxon>
        <taxon>Evosea</taxon>
        <taxon>Eumycetozoa</taxon>
        <taxon>Dictyostelia</taxon>
        <taxon>Dictyosteliales</taxon>
        <taxon>Dictyosteliaceae</taxon>
        <taxon>Dictyostelium</taxon>
    </lineage>
</organism>
<gene>
    <name type="primary">cdc7</name>
    <name type="ORF">DDB_G0292152</name>
</gene>
<accession>Q54DK3</accession>
<name>CDC7_DICDI</name>
<reference key="1">
    <citation type="journal article" date="2005" name="Nature">
        <title>The genome of the social amoeba Dictyostelium discoideum.</title>
        <authorList>
            <person name="Eichinger L."/>
            <person name="Pachebat J.A."/>
            <person name="Gloeckner G."/>
            <person name="Rajandream M.A."/>
            <person name="Sucgang R."/>
            <person name="Berriman M."/>
            <person name="Song J."/>
            <person name="Olsen R."/>
            <person name="Szafranski K."/>
            <person name="Xu Q."/>
            <person name="Tunggal B."/>
            <person name="Kummerfeld S."/>
            <person name="Madera M."/>
            <person name="Konfortov B.A."/>
            <person name="Rivero F."/>
            <person name="Bankier A.T."/>
            <person name="Lehmann R."/>
            <person name="Hamlin N."/>
            <person name="Davies R."/>
            <person name="Gaudet P."/>
            <person name="Fey P."/>
            <person name="Pilcher K."/>
            <person name="Chen G."/>
            <person name="Saunders D."/>
            <person name="Sodergren E.J."/>
            <person name="Davis P."/>
            <person name="Kerhornou A."/>
            <person name="Nie X."/>
            <person name="Hall N."/>
            <person name="Anjard C."/>
            <person name="Hemphill L."/>
            <person name="Bason N."/>
            <person name="Farbrother P."/>
            <person name="Desany B."/>
            <person name="Just E."/>
            <person name="Morio T."/>
            <person name="Rost R."/>
            <person name="Churcher C.M."/>
            <person name="Cooper J."/>
            <person name="Haydock S."/>
            <person name="van Driessche N."/>
            <person name="Cronin A."/>
            <person name="Goodhead I."/>
            <person name="Muzny D.M."/>
            <person name="Mourier T."/>
            <person name="Pain A."/>
            <person name="Lu M."/>
            <person name="Harper D."/>
            <person name="Lindsay R."/>
            <person name="Hauser H."/>
            <person name="James K.D."/>
            <person name="Quiles M."/>
            <person name="Madan Babu M."/>
            <person name="Saito T."/>
            <person name="Buchrieser C."/>
            <person name="Wardroper A."/>
            <person name="Felder M."/>
            <person name="Thangavelu M."/>
            <person name="Johnson D."/>
            <person name="Knights A."/>
            <person name="Loulseged H."/>
            <person name="Mungall K.L."/>
            <person name="Oliver K."/>
            <person name="Price C."/>
            <person name="Quail M.A."/>
            <person name="Urushihara H."/>
            <person name="Hernandez J."/>
            <person name="Rabbinowitsch E."/>
            <person name="Steffen D."/>
            <person name="Sanders M."/>
            <person name="Ma J."/>
            <person name="Kohara Y."/>
            <person name="Sharp S."/>
            <person name="Simmonds M.N."/>
            <person name="Spiegler S."/>
            <person name="Tivey A."/>
            <person name="Sugano S."/>
            <person name="White B."/>
            <person name="Walker D."/>
            <person name="Woodward J.R."/>
            <person name="Winckler T."/>
            <person name="Tanaka Y."/>
            <person name="Shaulsky G."/>
            <person name="Schleicher M."/>
            <person name="Weinstock G.M."/>
            <person name="Rosenthal A."/>
            <person name="Cox E.C."/>
            <person name="Chisholm R.L."/>
            <person name="Gibbs R.A."/>
            <person name="Loomis W.F."/>
            <person name="Platzer M."/>
            <person name="Kay R.R."/>
            <person name="Williams J.G."/>
            <person name="Dear P.H."/>
            <person name="Noegel A.A."/>
            <person name="Barrell B.G."/>
            <person name="Kuspa A."/>
        </authorList>
    </citation>
    <scope>NUCLEOTIDE SEQUENCE [LARGE SCALE GENOMIC DNA]</scope>
    <source>
        <strain>AX4</strain>
    </source>
</reference>
<sequence>MNWDSNNNNNKNSNNNNNNSSSSSYNINNNYSSFNNSNNNNINNNNINTNNNNNNNNNNNNNNNNNNNNNNNNNNNNNNKNNSSNNYHLAHINVYQQYPIKPLPISFNSFNTNMFQQQQQQQQQQQQLPQHLPPLGSSGSSNGGPNLMGYAQIPPNYFKPLSPPSFHPPTSPQSFFNNNTNNNNNNNNNNNNNINININNNNNSNNYINDSTNSNNLNTSNGAINTSSHLFINSPNHHSDNRSFIESRSPASMNASPIHFNDPTFKVPVHLPSLSITNSPSLNSSIDSSYRLNNNNNNNNNNGSNNSSFNSTPTKFEQLQLQLQQQQLQQQLQQQQQLQQQQQQLQQQQQLQQQQQQQLQQQQQQQLQQQQQQQQQQLQQQQQLQQQQQQQSTSHIHFSTAPTPIVSHHYNLQQPLQQYPQNIYSHTNILNQNNNSKPINTNSSSSNNNNNNNNNNNNNNNNNNNNNNCNYNNSNNSYNNNTTNTNNNPNNKRSQTKNQQQQQPQPQQQQLQQQQPQQSVINVNKKTTKVSKTKTSNQKLTVNNNNNNNNNNNNNNNNNNNNNNNNNNNNNNTIQQQQQQQSNDIKLLLKNSIYSSRNDLKELLSQPTEYTDSEYPEIVGKYRILEKIGQGTFSGVYKSVCIDGPNIGLIVALKRVAPTSSPARILNEIHSLLRVGGHYNVSALFGALRYKDQVTLILPFFEHDSFKDYFFQMSNENIKHYLYALFDSLRHIHQNNICHRDVKPTNFLYSIKNNSFLLIDFGLAQEMPNSNSNSNSNSNSNSNSNSNSNSNSNSNNNNNNNNNNTNNNFNGNNSNNDFNNFINMNNSNSNNNNNNNSNNNNNNNNNNNNNNNNNSNNNNNSNNSQEEIILPSTNENGTTTSNASSTSNTTSSSSSSSNKSKNLRNDPKPQPAPRAGTRGFRAPEVLLKYNKQTTAIDIWSVGVILLCMISGRYPFFISPDDMTSLAEIVSIIGTKKIVDIAHLLEKKISISHSIPPTPWRDLSRRLRSESSCDKQDVPVELYDLLERCLDPNPLTRITASEALLHPFLVVNNNSNNNNNNS</sequence>
<keyword id="KW-0067">ATP-binding</keyword>
<keyword id="KW-0175">Coiled coil</keyword>
<keyword id="KW-0418">Kinase</keyword>
<keyword id="KW-0460">Magnesium</keyword>
<keyword id="KW-0479">Metal-binding</keyword>
<keyword id="KW-0547">Nucleotide-binding</keyword>
<keyword id="KW-1185">Reference proteome</keyword>
<keyword id="KW-0723">Serine/threonine-protein kinase</keyword>
<keyword id="KW-0808">Transferase</keyword>
<protein>
    <recommendedName>
        <fullName>Probable serine/threonine-protein kinase cdc7</fullName>
        <ecNumber>2.7.11.1</ecNumber>
    </recommendedName>
    <alternativeName>
        <fullName>Cell division control protein 7</fullName>
    </alternativeName>
</protein>
<feature type="chain" id="PRO_0000362009" description="Probable serine/threonine-protein kinase cdc7">
    <location>
        <begin position="1"/>
        <end position="1061"/>
    </location>
</feature>
<feature type="domain" description="Protein kinase" evidence="3">
    <location>
        <begin position="622"/>
        <end position="1048"/>
    </location>
</feature>
<feature type="region of interest" description="Disordered" evidence="5">
    <location>
        <begin position="1"/>
        <end position="86"/>
    </location>
</feature>
<feature type="region of interest" description="Disordered" evidence="5">
    <location>
        <begin position="115"/>
        <end position="194"/>
    </location>
</feature>
<feature type="region of interest" description="Disordered" evidence="5">
    <location>
        <begin position="287"/>
        <end position="313"/>
    </location>
</feature>
<feature type="region of interest" description="Disordered" evidence="5">
    <location>
        <begin position="428"/>
        <end position="582"/>
    </location>
</feature>
<feature type="region of interest" description="Disordered" evidence="5">
    <location>
        <begin position="769"/>
        <end position="919"/>
    </location>
</feature>
<feature type="coiled-coil region" evidence="2">
    <location>
        <begin position="315"/>
        <end position="393"/>
    </location>
</feature>
<feature type="coiled-coil region" evidence="2">
    <location>
        <begin position="558"/>
        <end position="588"/>
    </location>
</feature>
<feature type="compositionally biased region" description="Low complexity" evidence="5">
    <location>
        <begin position="116"/>
        <end position="147"/>
    </location>
</feature>
<feature type="compositionally biased region" description="Pro residues" evidence="5">
    <location>
        <begin position="161"/>
        <end position="171"/>
    </location>
</feature>
<feature type="compositionally biased region" description="Low complexity" evidence="5">
    <location>
        <begin position="177"/>
        <end position="194"/>
    </location>
</feature>
<feature type="compositionally biased region" description="Low complexity" evidence="5">
    <location>
        <begin position="287"/>
        <end position="311"/>
    </location>
</feature>
<feature type="compositionally biased region" description="Low complexity" evidence="5">
    <location>
        <begin position="431"/>
        <end position="491"/>
    </location>
</feature>
<feature type="compositionally biased region" description="Low complexity" evidence="5">
    <location>
        <begin position="499"/>
        <end position="525"/>
    </location>
</feature>
<feature type="compositionally biased region" description="Low complexity" evidence="5">
    <location>
        <begin position="533"/>
        <end position="581"/>
    </location>
</feature>
<feature type="compositionally biased region" description="Low complexity" evidence="5">
    <location>
        <begin position="769"/>
        <end position="864"/>
    </location>
</feature>
<feature type="compositionally biased region" description="Low complexity" evidence="5">
    <location>
        <begin position="872"/>
        <end position="900"/>
    </location>
</feature>
<feature type="active site" description="Proton acceptor" evidence="3 4">
    <location>
        <position position="741"/>
    </location>
</feature>
<feature type="binding site" evidence="3">
    <location>
        <begin position="628"/>
        <end position="636"/>
    </location>
    <ligand>
        <name>ATP</name>
        <dbReference type="ChEBI" id="CHEBI:30616"/>
    </ligand>
</feature>
<feature type="binding site" evidence="3">
    <location>
        <position position="654"/>
    </location>
    <ligand>
        <name>ATP</name>
        <dbReference type="ChEBI" id="CHEBI:30616"/>
    </ligand>
</feature>
<evidence type="ECO:0000250" key="1"/>
<evidence type="ECO:0000255" key="2"/>
<evidence type="ECO:0000255" key="3">
    <source>
        <dbReference type="PROSITE-ProRule" id="PRU00159"/>
    </source>
</evidence>
<evidence type="ECO:0000255" key="4">
    <source>
        <dbReference type="PROSITE-ProRule" id="PRU10027"/>
    </source>
</evidence>
<evidence type="ECO:0000256" key="5">
    <source>
        <dbReference type="SAM" id="MobiDB-lite"/>
    </source>
</evidence>